<evidence type="ECO:0000255" key="1">
    <source>
        <dbReference type="HAMAP-Rule" id="MF_00823"/>
    </source>
</evidence>
<evidence type="ECO:0000255" key="2">
    <source>
        <dbReference type="PROSITE-ProRule" id="PRU01137"/>
    </source>
</evidence>
<proteinExistence type="inferred from homology"/>
<accession>B1JUK6</accession>
<dbReference type="EC" id="2.1.3.15" evidence="1"/>
<dbReference type="EMBL" id="CP000958">
    <property type="protein sequence ID" value="ACA91256.1"/>
    <property type="molecule type" value="Genomic_DNA"/>
</dbReference>
<dbReference type="RefSeq" id="WP_006478433.1">
    <property type="nucleotide sequence ID" value="NC_010508.1"/>
</dbReference>
<dbReference type="SMR" id="B1JUK6"/>
<dbReference type="KEGG" id="bcm:Bcenmc03_2095"/>
<dbReference type="HOGENOM" id="CLU_015486_0_2_4"/>
<dbReference type="UniPathway" id="UPA00655">
    <property type="reaction ID" value="UER00711"/>
</dbReference>
<dbReference type="Proteomes" id="UP000002169">
    <property type="component" value="Chromosome 1"/>
</dbReference>
<dbReference type="GO" id="GO:0009317">
    <property type="term" value="C:acetyl-CoA carboxylase complex"/>
    <property type="evidence" value="ECO:0007669"/>
    <property type="project" value="InterPro"/>
</dbReference>
<dbReference type="GO" id="GO:0003989">
    <property type="term" value="F:acetyl-CoA carboxylase activity"/>
    <property type="evidence" value="ECO:0007669"/>
    <property type="project" value="InterPro"/>
</dbReference>
<dbReference type="GO" id="GO:0005524">
    <property type="term" value="F:ATP binding"/>
    <property type="evidence" value="ECO:0007669"/>
    <property type="project" value="UniProtKB-KW"/>
</dbReference>
<dbReference type="GO" id="GO:0016743">
    <property type="term" value="F:carboxyl- or carbamoyltransferase activity"/>
    <property type="evidence" value="ECO:0007669"/>
    <property type="project" value="UniProtKB-UniRule"/>
</dbReference>
<dbReference type="GO" id="GO:0006633">
    <property type="term" value="P:fatty acid biosynthetic process"/>
    <property type="evidence" value="ECO:0007669"/>
    <property type="project" value="UniProtKB-KW"/>
</dbReference>
<dbReference type="GO" id="GO:2001295">
    <property type="term" value="P:malonyl-CoA biosynthetic process"/>
    <property type="evidence" value="ECO:0007669"/>
    <property type="project" value="UniProtKB-UniRule"/>
</dbReference>
<dbReference type="Gene3D" id="3.90.226.10">
    <property type="entry name" value="2-enoyl-CoA Hydratase, Chain A, domain 1"/>
    <property type="match status" value="1"/>
</dbReference>
<dbReference type="HAMAP" id="MF_00823">
    <property type="entry name" value="AcetylCoA_CT_alpha"/>
    <property type="match status" value="1"/>
</dbReference>
<dbReference type="InterPro" id="IPR001095">
    <property type="entry name" value="Acetyl_CoA_COase_a_su"/>
</dbReference>
<dbReference type="InterPro" id="IPR029045">
    <property type="entry name" value="ClpP/crotonase-like_dom_sf"/>
</dbReference>
<dbReference type="InterPro" id="IPR011763">
    <property type="entry name" value="COA_CT_C"/>
</dbReference>
<dbReference type="NCBIfam" id="TIGR00513">
    <property type="entry name" value="accA"/>
    <property type="match status" value="1"/>
</dbReference>
<dbReference type="NCBIfam" id="NF041504">
    <property type="entry name" value="AccA_sub"/>
    <property type="match status" value="1"/>
</dbReference>
<dbReference type="NCBIfam" id="NF004344">
    <property type="entry name" value="PRK05724.1"/>
    <property type="match status" value="1"/>
</dbReference>
<dbReference type="PANTHER" id="PTHR42853">
    <property type="entry name" value="ACETYL-COENZYME A CARBOXYLASE CARBOXYL TRANSFERASE SUBUNIT ALPHA"/>
    <property type="match status" value="1"/>
</dbReference>
<dbReference type="PANTHER" id="PTHR42853:SF3">
    <property type="entry name" value="ACETYL-COENZYME A CARBOXYLASE CARBOXYL TRANSFERASE SUBUNIT ALPHA, CHLOROPLASTIC"/>
    <property type="match status" value="1"/>
</dbReference>
<dbReference type="Pfam" id="PF03255">
    <property type="entry name" value="ACCA"/>
    <property type="match status" value="1"/>
</dbReference>
<dbReference type="PRINTS" id="PR01069">
    <property type="entry name" value="ACCCTRFRASEA"/>
</dbReference>
<dbReference type="SUPFAM" id="SSF52096">
    <property type="entry name" value="ClpP/crotonase"/>
    <property type="match status" value="1"/>
</dbReference>
<dbReference type="PROSITE" id="PS50989">
    <property type="entry name" value="COA_CT_CTER"/>
    <property type="match status" value="1"/>
</dbReference>
<reference key="1">
    <citation type="submission" date="2008-02" db="EMBL/GenBank/DDBJ databases">
        <title>Complete sequence of chromosome 1 of Burkholderia cenocepacia MC0-3.</title>
        <authorList>
            <person name="Copeland A."/>
            <person name="Lucas S."/>
            <person name="Lapidus A."/>
            <person name="Barry K."/>
            <person name="Bruce D."/>
            <person name="Goodwin L."/>
            <person name="Glavina del Rio T."/>
            <person name="Dalin E."/>
            <person name="Tice H."/>
            <person name="Pitluck S."/>
            <person name="Chain P."/>
            <person name="Malfatti S."/>
            <person name="Shin M."/>
            <person name="Vergez L."/>
            <person name="Schmutz J."/>
            <person name="Larimer F."/>
            <person name="Land M."/>
            <person name="Hauser L."/>
            <person name="Kyrpides N."/>
            <person name="Mikhailova N."/>
            <person name="Tiedje J."/>
            <person name="Richardson P."/>
        </authorList>
    </citation>
    <scope>NUCLEOTIDE SEQUENCE [LARGE SCALE GENOMIC DNA]</scope>
    <source>
        <strain>MC0-3</strain>
    </source>
</reference>
<comment type="function">
    <text evidence="1">Component of the acetyl coenzyme A carboxylase (ACC) complex. First, biotin carboxylase catalyzes the carboxylation of biotin on its carrier protein (BCCP) and then the CO(2) group is transferred by the carboxyltransferase to acetyl-CoA to form malonyl-CoA.</text>
</comment>
<comment type="catalytic activity">
    <reaction evidence="1">
        <text>N(6)-carboxybiotinyl-L-lysyl-[protein] + acetyl-CoA = N(6)-biotinyl-L-lysyl-[protein] + malonyl-CoA</text>
        <dbReference type="Rhea" id="RHEA:54728"/>
        <dbReference type="Rhea" id="RHEA-COMP:10505"/>
        <dbReference type="Rhea" id="RHEA-COMP:10506"/>
        <dbReference type="ChEBI" id="CHEBI:57288"/>
        <dbReference type="ChEBI" id="CHEBI:57384"/>
        <dbReference type="ChEBI" id="CHEBI:83144"/>
        <dbReference type="ChEBI" id="CHEBI:83145"/>
        <dbReference type="EC" id="2.1.3.15"/>
    </reaction>
</comment>
<comment type="pathway">
    <text evidence="1">Lipid metabolism; malonyl-CoA biosynthesis; malonyl-CoA from acetyl-CoA: step 1/1.</text>
</comment>
<comment type="subunit">
    <text evidence="1">Acetyl-CoA carboxylase is a heterohexamer composed of biotin carboxyl carrier protein (AccB), biotin carboxylase (AccC) and two subunits each of ACCase subunit alpha (AccA) and ACCase subunit beta (AccD).</text>
</comment>
<comment type="subcellular location">
    <subcellularLocation>
        <location evidence="1">Cytoplasm</location>
    </subcellularLocation>
</comment>
<comment type="similarity">
    <text evidence="1">Belongs to the AccA family.</text>
</comment>
<organism>
    <name type="scientific">Burkholderia orbicola (strain MC0-3)</name>
    <dbReference type="NCBI Taxonomy" id="406425"/>
    <lineage>
        <taxon>Bacteria</taxon>
        <taxon>Pseudomonadati</taxon>
        <taxon>Pseudomonadota</taxon>
        <taxon>Betaproteobacteria</taxon>
        <taxon>Burkholderiales</taxon>
        <taxon>Burkholderiaceae</taxon>
        <taxon>Burkholderia</taxon>
        <taxon>Burkholderia cepacia complex</taxon>
        <taxon>Burkholderia orbicola</taxon>
    </lineage>
</organism>
<sequence>MKTTFLDFEQPIAELEAKIEELRFVQDDSAVDISEEIERLSKKSQQLTKDLYANLSPWQVSQIARHPQRPYTLDYVAELFTDFHELHGDRAFADDLSIVGGLARFGGHPCMVIGHQKGRDTKERAARNFGMPRPEGYRKAERLMRLAEKFGLPIFTFVDTPGAYPGIGAEERGQSEAIGRNLYVMAELKTPIITTVIGEGGSGGALAIAVADTVMMLQFSTYSVISPEGCASILWKSAAKAPEAAEALGLTAHRLKALGLIDKIINEPLGGAHRDPKGMAALLRRALADSLRQFQGMSIDALRERRFERLMAYGKFKETTPGA</sequence>
<protein>
    <recommendedName>
        <fullName evidence="1">Acetyl-coenzyme A carboxylase carboxyl transferase subunit alpha</fullName>
        <shortName evidence="1">ACCase subunit alpha</shortName>
        <shortName evidence="1">Acetyl-CoA carboxylase carboxyltransferase subunit alpha</shortName>
        <ecNumber evidence="1">2.1.3.15</ecNumber>
    </recommendedName>
</protein>
<gene>
    <name evidence="1" type="primary">accA</name>
    <name type="ordered locus">Bcenmc03_2095</name>
</gene>
<name>ACCA_BURO0</name>
<feature type="chain" id="PRO_1000134463" description="Acetyl-coenzyme A carboxylase carboxyl transferase subunit alpha">
    <location>
        <begin position="1"/>
        <end position="323"/>
    </location>
</feature>
<feature type="domain" description="CoA carboxyltransferase C-terminal" evidence="2">
    <location>
        <begin position="39"/>
        <end position="293"/>
    </location>
</feature>
<keyword id="KW-0067">ATP-binding</keyword>
<keyword id="KW-0963">Cytoplasm</keyword>
<keyword id="KW-0275">Fatty acid biosynthesis</keyword>
<keyword id="KW-0276">Fatty acid metabolism</keyword>
<keyword id="KW-0444">Lipid biosynthesis</keyword>
<keyword id="KW-0443">Lipid metabolism</keyword>
<keyword id="KW-0547">Nucleotide-binding</keyword>
<keyword id="KW-0808">Transferase</keyword>